<accession>B7NRZ5</accession>
<feature type="chain" id="PRO_1000136209" description="Protein PsiE">
    <location>
        <begin position="1"/>
        <end position="136"/>
    </location>
</feature>
<feature type="transmembrane region" description="Helical" evidence="1">
    <location>
        <begin position="15"/>
        <end position="35"/>
    </location>
</feature>
<feature type="transmembrane region" description="Helical" evidence="1">
    <location>
        <begin position="55"/>
        <end position="75"/>
    </location>
</feature>
<feature type="transmembrane region" description="Helical" evidence="1">
    <location>
        <begin position="82"/>
        <end position="102"/>
    </location>
</feature>
<feature type="transmembrane region" description="Helical" evidence="1">
    <location>
        <begin position="108"/>
        <end position="128"/>
    </location>
</feature>
<dbReference type="EMBL" id="CU928164">
    <property type="protein sequence ID" value="CAR20558.1"/>
    <property type="molecule type" value="Genomic_DNA"/>
</dbReference>
<dbReference type="RefSeq" id="WP_000202902.1">
    <property type="nucleotide sequence ID" value="NC_011750.1"/>
</dbReference>
<dbReference type="RefSeq" id="YP_002410325.1">
    <property type="nucleotide sequence ID" value="NC_011750.1"/>
</dbReference>
<dbReference type="SMR" id="B7NRZ5"/>
<dbReference type="STRING" id="585057.ECIAI39_4452"/>
<dbReference type="GeneID" id="93777857"/>
<dbReference type="KEGG" id="ect:ECIAI39_4452"/>
<dbReference type="PATRIC" id="fig|585057.6.peg.4598"/>
<dbReference type="HOGENOM" id="CLU_127561_0_1_6"/>
<dbReference type="Proteomes" id="UP000000749">
    <property type="component" value="Chromosome"/>
</dbReference>
<dbReference type="GO" id="GO:0005886">
    <property type="term" value="C:plasma membrane"/>
    <property type="evidence" value="ECO:0007669"/>
    <property type="project" value="UniProtKB-SubCell"/>
</dbReference>
<dbReference type="GO" id="GO:0016036">
    <property type="term" value="P:cellular response to phosphate starvation"/>
    <property type="evidence" value="ECO:0007669"/>
    <property type="project" value="InterPro"/>
</dbReference>
<dbReference type="HAMAP" id="MF_01048">
    <property type="entry name" value="PsiE"/>
    <property type="match status" value="1"/>
</dbReference>
<dbReference type="InterPro" id="IPR009315">
    <property type="entry name" value="P_starv_induced_PsiE"/>
</dbReference>
<dbReference type="InterPro" id="IPR020948">
    <property type="entry name" value="P_starv_induced_PsiE-like"/>
</dbReference>
<dbReference type="NCBIfam" id="NF002764">
    <property type="entry name" value="PRK02833.1-2"/>
    <property type="match status" value="1"/>
</dbReference>
<dbReference type="NCBIfam" id="NF002765">
    <property type="entry name" value="PRK02833.1-3"/>
    <property type="match status" value="1"/>
</dbReference>
<dbReference type="NCBIfam" id="NF002767">
    <property type="entry name" value="PRK02833.1-5"/>
    <property type="match status" value="1"/>
</dbReference>
<dbReference type="PANTHER" id="PTHR37819">
    <property type="entry name" value="PROTEIN PSIE"/>
    <property type="match status" value="1"/>
</dbReference>
<dbReference type="PANTHER" id="PTHR37819:SF1">
    <property type="entry name" value="PROTEIN PSIE"/>
    <property type="match status" value="1"/>
</dbReference>
<dbReference type="Pfam" id="PF06146">
    <property type="entry name" value="PsiE"/>
    <property type="match status" value="1"/>
</dbReference>
<dbReference type="PIRSF" id="PIRSF029598">
    <property type="entry name" value="PsiE"/>
    <property type="match status" value="1"/>
</dbReference>
<organism>
    <name type="scientific">Escherichia coli O7:K1 (strain IAI39 / ExPEC)</name>
    <dbReference type="NCBI Taxonomy" id="585057"/>
    <lineage>
        <taxon>Bacteria</taxon>
        <taxon>Pseudomonadati</taxon>
        <taxon>Pseudomonadota</taxon>
        <taxon>Gammaproteobacteria</taxon>
        <taxon>Enterobacterales</taxon>
        <taxon>Enterobacteriaceae</taxon>
        <taxon>Escherichia</taxon>
    </lineage>
</organism>
<evidence type="ECO:0000255" key="1">
    <source>
        <dbReference type="HAMAP-Rule" id="MF_01048"/>
    </source>
</evidence>
<sequence>MTSLSRPRVEFISTILQTVLNLGLLCLGLILVVFLGKETVHLADVLFAPEQTSKYELVEGLVVYFLYFEFIALIVKYFQSGFHFPLRYFVYIGITAIVRLIIVDHKSPLDVLIYSAAILLLVITLWLCNSKRLKRE</sequence>
<proteinExistence type="inferred from homology"/>
<keyword id="KW-0997">Cell inner membrane</keyword>
<keyword id="KW-1003">Cell membrane</keyword>
<keyword id="KW-0472">Membrane</keyword>
<keyword id="KW-0812">Transmembrane</keyword>
<keyword id="KW-1133">Transmembrane helix</keyword>
<name>PSIE_ECO7I</name>
<reference key="1">
    <citation type="journal article" date="2009" name="PLoS Genet.">
        <title>Organised genome dynamics in the Escherichia coli species results in highly diverse adaptive paths.</title>
        <authorList>
            <person name="Touchon M."/>
            <person name="Hoede C."/>
            <person name="Tenaillon O."/>
            <person name="Barbe V."/>
            <person name="Baeriswyl S."/>
            <person name="Bidet P."/>
            <person name="Bingen E."/>
            <person name="Bonacorsi S."/>
            <person name="Bouchier C."/>
            <person name="Bouvet O."/>
            <person name="Calteau A."/>
            <person name="Chiapello H."/>
            <person name="Clermont O."/>
            <person name="Cruveiller S."/>
            <person name="Danchin A."/>
            <person name="Diard M."/>
            <person name="Dossat C."/>
            <person name="Karoui M.E."/>
            <person name="Frapy E."/>
            <person name="Garry L."/>
            <person name="Ghigo J.M."/>
            <person name="Gilles A.M."/>
            <person name="Johnson J."/>
            <person name="Le Bouguenec C."/>
            <person name="Lescat M."/>
            <person name="Mangenot S."/>
            <person name="Martinez-Jehanne V."/>
            <person name="Matic I."/>
            <person name="Nassif X."/>
            <person name="Oztas S."/>
            <person name="Petit M.A."/>
            <person name="Pichon C."/>
            <person name="Rouy Z."/>
            <person name="Ruf C.S."/>
            <person name="Schneider D."/>
            <person name="Tourret J."/>
            <person name="Vacherie B."/>
            <person name="Vallenet D."/>
            <person name="Medigue C."/>
            <person name="Rocha E.P.C."/>
            <person name="Denamur E."/>
        </authorList>
    </citation>
    <scope>NUCLEOTIDE SEQUENCE [LARGE SCALE GENOMIC DNA]</scope>
    <source>
        <strain>IAI39 / ExPEC</strain>
    </source>
</reference>
<protein>
    <recommendedName>
        <fullName evidence="1">Protein PsiE</fullName>
    </recommendedName>
</protein>
<comment type="subcellular location">
    <subcellularLocation>
        <location evidence="1">Cell inner membrane</location>
        <topology evidence="1">Multi-pass membrane protein</topology>
    </subcellularLocation>
</comment>
<comment type="similarity">
    <text evidence="1">Belongs to the PsiE family.</text>
</comment>
<gene>
    <name evidence="1" type="primary">psiE</name>
    <name type="ordered locus">ECIAI39_4452</name>
</gene>